<comment type="function">
    <text evidence="1">Specifically catalyzes the cleavage of the D-lactyl ether substituent of MurNAc 6-phosphate, producing GlcNAc 6-phosphate and D-lactate.</text>
</comment>
<comment type="catalytic activity">
    <reaction evidence="1">
        <text>N-acetyl-D-muramate 6-phosphate + H2O = N-acetyl-D-glucosamine 6-phosphate + (R)-lactate</text>
        <dbReference type="Rhea" id="RHEA:26410"/>
        <dbReference type="ChEBI" id="CHEBI:15377"/>
        <dbReference type="ChEBI" id="CHEBI:16004"/>
        <dbReference type="ChEBI" id="CHEBI:57513"/>
        <dbReference type="ChEBI" id="CHEBI:58722"/>
        <dbReference type="EC" id="4.2.1.126"/>
    </reaction>
</comment>
<comment type="pathway">
    <text evidence="1">Amino-sugar metabolism; N-acetylmuramate degradation.</text>
</comment>
<comment type="subunit">
    <text evidence="1">Homodimer.</text>
</comment>
<comment type="miscellaneous">
    <text evidence="1">A lyase-type mechanism (elimination/hydration) is suggested for the cleavage of the lactyl ether bond of MurNAc 6-phosphate, with the formation of an alpha,beta-unsaturated aldehyde intermediate with (E)-stereochemistry, followed by the syn addition of water to give product.</text>
</comment>
<comment type="similarity">
    <text evidence="1">Belongs to the GCKR-like family. MurNAc-6-P etherase subfamily.</text>
</comment>
<accession>Q04HN0</accession>
<sequence length="297" mass="31676">MDLSKLTTEARNKRTMNLDRMTIHEFATIMNQEDQSVPLSVANSLATIENAIDSITKHFKQGGRLFYIGAGTSGRLGVLDAVECVPTFGIEAEMVRGLIAGGPSAMTLAVEGAEDDDKLASSDLKKRALTAADVVVGIAASGRTPYVIGGLDYADSLGAATISLACNQNSEISKHAQIAIEVPVGPEILTGSTRLKAGTAQKLVLNMLSTGAMVGIGKVYKNLMVDVRPTNEKLLIRSKRIICQATNCDEATAAEVFEKADRNVKLAIVMILTNLPKKEANEQLRKADGFISKTIPE</sequence>
<reference key="1">
    <citation type="journal article" date="2006" name="Proc. Natl. Acad. Sci. U.S.A.">
        <title>Comparative genomics of the lactic acid bacteria.</title>
        <authorList>
            <person name="Makarova K.S."/>
            <person name="Slesarev A."/>
            <person name="Wolf Y.I."/>
            <person name="Sorokin A."/>
            <person name="Mirkin B."/>
            <person name="Koonin E.V."/>
            <person name="Pavlov A."/>
            <person name="Pavlova N."/>
            <person name="Karamychev V."/>
            <person name="Polouchine N."/>
            <person name="Shakhova V."/>
            <person name="Grigoriev I."/>
            <person name="Lou Y."/>
            <person name="Rohksar D."/>
            <person name="Lucas S."/>
            <person name="Huang K."/>
            <person name="Goodstein D.M."/>
            <person name="Hawkins T."/>
            <person name="Plengvidhya V."/>
            <person name="Welker D."/>
            <person name="Hughes J."/>
            <person name="Goh Y."/>
            <person name="Benson A."/>
            <person name="Baldwin K."/>
            <person name="Lee J.-H."/>
            <person name="Diaz-Muniz I."/>
            <person name="Dosti B."/>
            <person name="Smeianov V."/>
            <person name="Wechter W."/>
            <person name="Barabote R."/>
            <person name="Lorca G."/>
            <person name="Altermann E."/>
            <person name="Barrangou R."/>
            <person name="Ganesan B."/>
            <person name="Xie Y."/>
            <person name="Rawsthorne H."/>
            <person name="Tamir D."/>
            <person name="Parker C."/>
            <person name="Breidt F."/>
            <person name="Broadbent J.R."/>
            <person name="Hutkins R."/>
            <person name="O'Sullivan D."/>
            <person name="Steele J."/>
            <person name="Unlu G."/>
            <person name="Saier M.H. Jr."/>
            <person name="Klaenhammer T."/>
            <person name="Richardson P."/>
            <person name="Kozyavkin S."/>
            <person name="Weimer B.C."/>
            <person name="Mills D.A."/>
        </authorList>
    </citation>
    <scope>NUCLEOTIDE SEQUENCE [LARGE SCALE GENOMIC DNA]</scope>
    <source>
        <strain>ATCC BAA-331 / PSU-1</strain>
    </source>
</reference>
<proteinExistence type="inferred from homology"/>
<keyword id="KW-0119">Carbohydrate metabolism</keyword>
<keyword id="KW-0456">Lyase</keyword>
<keyword id="KW-1185">Reference proteome</keyword>
<organism>
    <name type="scientific">Oenococcus oeni (strain ATCC BAA-331 / PSU-1)</name>
    <dbReference type="NCBI Taxonomy" id="203123"/>
    <lineage>
        <taxon>Bacteria</taxon>
        <taxon>Bacillati</taxon>
        <taxon>Bacillota</taxon>
        <taxon>Bacilli</taxon>
        <taxon>Lactobacillales</taxon>
        <taxon>Lactobacillaceae</taxon>
        <taxon>Oenococcus</taxon>
    </lineage>
</organism>
<evidence type="ECO:0000255" key="1">
    <source>
        <dbReference type="HAMAP-Rule" id="MF_00068"/>
    </source>
</evidence>
<gene>
    <name evidence="1" type="primary">murQ</name>
    <name type="ordered locus">OEOE_0038</name>
</gene>
<feature type="chain" id="PRO_1000009127" description="N-acetylmuramic acid 6-phosphate etherase">
    <location>
        <begin position="1"/>
        <end position="297"/>
    </location>
</feature>
<feature type="domain" description="SIS" evidence="1">
    <location>
        <begin position="55"/>
        <end position="218"/>
    </location>
</feature>
<feature type="active site" description="Proton donor" evidence="1">
    <location>
        <position position="83"/>
    </location>
</feature>
<feature type="active site" evidence="1">
    <location>
        <position position="114"/>
    </location>
</feature>
<name>MURQ_OENOB</name>
<protein>
    <recommendedName>
        <fullName evidence="1">N-acetylmuramic acid 6-phosphate etherase</fullName>
        <shortName evidence="1">MurNAc-6-P etherase</shortName>
        <ecNumber evidence="1">4.2.1.126</ecNumber>
    </recommendedName>
    <alternativeName>
        <fullName evidence="1">N-acetylmuramic acid 6-phosphate hydrolase</fullName>
    </alternativeName>
    <alternativeName>
        <fullName evidence="1">N-acetylmuramic acid 6-phosphate lyase</fullName>
    </alternativeName>
</protein>
<dbReference type="EC" id="4.2.1.126" evidence="1"/>
<dbReference type="EMBL" id="CP000411">
    <property type="protein sequence ID" value="ABJ56042.1"/>
    <property type="molecule type" value="Genomic_DNA"/>
</dbReference>
<dbReference type="RefSeq" id="WP_011677335.1">
    <property type="nucleotide sequence ID" value="NC_008528.1"/>
</dbReference>
<dbReference type="SMR" id="Q04HN0"/>
<dbReference type="STRING" id="203123.OEOE_0038"/>
<dbReference type="KEGG" id="ooe:OEOE_0038"/>
<dbReference type="PATRIC" id="fig|203123.7.peg.38"/>
<dbReference type="eggNOG" id="COG2103">
    <property type="taxonomic scope" value="Bacteria"/>
</dbReference>
<dbReference type="HOGENOM" id="CLU_049049_1_1_9"/>
<dbReference type="UniPathway" id="UPA00342"/>
<dbReference type="Proteomes" id="UP000000774">
    <property type="component" value="Chromosome"/>
</dbReference>
<dbReference type="GO" id="GO:0097367">
    <property type="term" value="F:carbohydrate derivative binding"/>
    <property type="evidence" value="ECO:0007669"/>
    <property type="project" value="InterPro"/>
</dbReference>
<dbReference type="GO" id="GO:0016835">
    <property type="term" value="F:carbon-oxygen lyase activity"/>
    <property type="evidence" value="ECO:0007669"/>
    <property type="project" value="UniProtKB-UniRule"/>
</dbReference>
<dbReference type="GO" id="GO:0016803">
    <property type="term" value="F:ether hydrolase activity"/>
    <property type="evidence" value="ECO:0007669"/>
    <property type="project" value="TreeGrafter"/>
</dbReference>
<dbReference type="GO" id="GO:0046348">
    <property type="term" value="P:amino sugar catabolic process"/>
    <property type="evidence" value="ECO:0007669"/>
    <property type="project" value="InterPro"/>
</dbReference>
<dbReference type="GO" id="GO:0097173">
    <property type="term" value="P:N-acetylmuramic acid catabolic process"/>
    <property type="evidence" value="ECO:0007669"/>
    <property type="project" value="UniProtKB-UniPathway"/>
</dbReference>
<dbReference type="GO" id="GO:0009254">
    <property type="term" value="P:peptidoglycan turnover"/>
    <property type="evidence" value="ECO:0007669"/>
    <property type="project" value="TreeGrafter"/>
</dbReference>
<dbReference type="CDD" id="cd05007">
    <property type="entry name" value="SIS_Etherase"/>
    <property type="match status" value="1"/>
</dbReference>
<dbReference type="FunFam" id="1.10.8.1080:FF:000001">
    <property type="entry name" value="N-acetylmuramic acid 6-phosphate etherase"/>
    <property type="match status" value="1"/>
</dbReference>
<dbReference type="FunFam" id="3.40.50.10490:FF:000014">
    <property type="entry name" value="N-acetylmuramic acid 6-phosphate etherase"/>
    <property type="match status" value="1"/>
</dbReference>
<dbReference type="Gene3D" id="1.10.8.1080">
    <property type="match status" value="1"/>
</dbReference>
<dbReference type="Gene3D" id="3.40.50.10490">
    <property type="entry name" value="Glucose-6-phosphate isomerase like protein, domain 1"/>
    <property type="match status" value="2"/>
</dbReference>
<dbReference type="HAMAP" id="MF_00068">
    <property type="entry name" value="MurQ"/>
    <property type="match status" value="1"/>
</dbReference>
<dbReference type="InterPro" id="IPR005488">
    <property type="entry name" value="Etherase_MurQ"/>
</dbReference>
<dbReference type="InterPro" id="IPR005486">
    <property type="entry name" value="Glucokinase_regulatory_CS"/>
</dbReference>
<dbReference type="InterPro" id="IPR040190">
    <property type="entry name" value="MURQ/GCKR"/>
</dbReference>
<dbReference type="InterPro" id="IPR001347">
    <property type="entry name" value="SIS_dom"/>
</dbReference>
<dbReference type="InterPro" id="IPR046348">
    <property type="entry name" value="SIS_dom_sf"/>
</dbReference>
<dbReference type="NCBIfam" id="TIGR00274">
    <property type="entry name" value="N-acetylmuramic acid 6-phosphate etherase"/>
    <property type="match status" value="1"/>
</dbReference>
<dbReference type="NCBIfam" id="NF003915">
    <property type="entry name" value="PRK05441.1"/>
    <property type="match status" value="1"/>
</dbReference>
<dbReference type="NCBIfam" id="NF009222">
    <property type="entry name" value="PRK12570.1"/>
    <property type="match status" value="1"/>
</dbReference>
<dbReference type="PANTHER" id="PTHR10088">
    <property type="entry name" value="GLUCOKINASE REGULATORY PROTEIN"/>
    <property type="match status" value="1"/>
</dbReference>
<dbReference type="PANTHER" id="PTHR10088:SF4">
    <property type="entry name" value="GLUCOKINASE REGULATORY PROTEIN"/>
    <property type="match status" value="1"/>
</dbReference>
<dbReference type="Pfam" id="PF22645">
    <property type="entry name" value="GKRP_SIS_N"/>
    <property type="match status" value="1"/>
</dbReference>
<dbReference type="SUPFAM" id="SSF53697">
    <property type="entry name" value="SIS domain"/>
    <property type="match status" value="1"/>
</dbReference>
<dbReference type="PROSITE" id="PS01272">
    <property type="entry name" value="GCKR"/>
    <property type="match status" value="1"/>
</dbReference>
<dbReference type="PROSITE" id="PS51464">
    <property type="entry name" value="SIS"/>
    <property type="match status" value="1"/>
</dbReference>